<accession>Q92AA1</accession>
<gene>
    <name evidence="1" type="primary">dapB</name>
    <name type="ordered locus">lin2021</name>
</gene>
<organism>
    <name type="scientific">Listeria innocua serovar 6a (strain ATCC BAA-680 / CLIP 11262)</name>
    <dbReference type="NCBI Taxonomy" id="272626"/>
    <lineage>
        <taxon>Bacteria</taxon>
        <taxon>Bacillati</taxon>
        <taxon>Bacillota</taxon>
        <taxon>Bacilli</taxon>
        <taxon>Bacillales</taxon>
        <taxon>Listeriaceae</taxon>
        <taxon>Listeria</taxon>
    </lineage>
</organism>
<proteinExistence type="inferred from homology"/>
<keyword id="KW-0028">Amino-acid biosynthesis</keyword>
<keyword id="KW-0963">Cytoplasm</keyword>
<keyword id="KW-0220">Diaminopimelate biosynthesis</keyword>
<keyword id="KW-0457">Lysine biosynthesis</keyword>
<keyword id="KW-0520">NAD</keyword>
<keyword id="KW-0521">NADP</keyword>
<keyword id="KW-0560">Oxidoreductase</keyword>
<evidence type="ECO:0000255" key="1">
    <source>
        <dbReference type="HAMAP-Rule" id="MF_00102"/>
    </source>
</evidence>
<evidence type="ECO:0000305" key="2"/>
<dbReference type="EC" id="1.17.1.8" evidence="1"/>
<dbReference type="EMBL" id="AL596170">
    <property type="protein sequence ID" value="CAC97251.1"/>
    <property type="molecule type" value="Genomic_DNA"/>
</dbReference>
<dbReference type="PIR" id="AC1685">
    <property type="entry name" value="AC1685"/>
</dbReference>
<dbReference type="RefSeq" id="WP_010991709.1">
    <property type="nucleotide sequence ID" value="NC_003212.1"/>
</dbReference>
<dbReference type="SMR" id="Q92AA1"/>
<dbReference type="STRING" id="272626.gene:17566379"/>
<dbReference type="GeneID" id="93235359"/>
<dbReference type="KEGG" id="lin:dapB"/>
<dbReference type="eggNOG" id="COG0289">
    <property type="taxonomic scope" value="Bacteria"/>
</dbReference>
<dbReference type="HOGENOM" id="CLU_047479_0_1_9"/>
<dbReference type="OrthoDB" id="9790352at2"/>
<dbReference type="UniPathway" id="UPA00034">
    <property type="reaction ID" value="UER00018"/>
</dbReference>
<dbReference type="Proteomes" id="UP000002513">
    <property type="component" value="Chromosome"/>
</dbReference>
<dbReference type="GO" id="GO:0005829">
    <property type="term" value="C:cytosol"/>
    <property type="evidence" value="ECO:0007669"/>
    <property type="project" value="TreeGrafter"/>
</dbReference>
<dbReference type="GO" id="GO:0008839">
    <property type="term" value="F:4-hydroxy-tetrahydrodipicolinate reductase"/>
    <property type="evidence" value="ECO:0007669"/>
    <property type="project" value="UniProtKB-EC"/>
</dbReference>
<dbReference type="GO" id="GO:0051287">
    <property type="term" value="F:NAD binding"/>
    <property type="evidence" value="ECO:0007669"/>
    <property type="project" value="UniProtKB-UniRule"/>
</dbReference>
<dbReference type="GO" id="GO:0050661">
    <property type="term" value="F:NADP binding"/>
    <property type="evidence" value="ECO:0007669"/>
    <property type="project" value="UniProtKB-UniRule"/>
</dbReference>
<dbReference type="GO" id="GO:0016726">
    <property type="term" value="F:oxidoreductase activity, acting on CH or CH2 groups, NAD or NADP as acceptor"/>
    <property type="evidence" value="ECO:0007669"/>
    <property type="project" value="UniProtKB-UniRule"/>
</dbReference>
<dbReference type="GO" id="GO:0019877">
    <property type="term" value="P:diaminopimelate biosynthetic process"/>
    <property type="evidence" value="ECO:0007669"/>
    <property type="project" value="UniProtKB-UniRule"/>
</dbReference>
<dbReference type="GO" id="GO:0009089">
    <property type="term" value="P:lysine biosynthetic process via diaminopimelate"/>
    <property type="evidence" value="ECO:0007669"/>
    <property type="project" value="UniProtKB-UniRule"/>
</dbReference>
<dbReference type="CDD" id="cd02274">
    <property type="entry name" value="DHDPR_N"/>
    <property type="match status" value="1"/>
</dbReference>
<dbReference type="FunFam" id="3.30.360.10:FF:000009">
    <property type="entry name" value="4-hydroxy-tetrahydrodipicolinate reductase"/>
    <property type="match status" value="1"/>
</dbReference>
<dbReference type="Gene3D" id="3.30.360.10">
    <property type="entry name" value="Dihydrodipicolinate Reductase, domain 2"/>
    <property type="match status" value="1"/>
</dbReference>
<dbReference type="Gene3D" id="3.40.50.720">
    <property type="entry name" value="NAD(P)-binding Rossmann-like Domain"/>
    <property type="match status" value="1"/>
</dbReference>
<dbReference type="HAMAP" id="MF_00102">
    <property type="entry name" value="DapB"/>
    <property type="match status" value="1"/>
</dbReference>
<dbReference type="InterPro" id="IPR022663">
    <property type="entry name" value="DapB_C"/>
</dbReference>
<dbReference type="InterPro" id="IPR000846">
    <property type="entry name" value="DapB_N"/>
</dbReference>
<dbReference type="InterPro" id="IPR022664">
    <property type="entry name" value="DapB_N_CS"/>
</dbReference>
<dbReference type="InterPro" id="IPR023940">
    <property type="entry name" value="DHDPR_bac"/>
</dbReference>
<dbReference type="InterPro" id="IPR036291">
    <property type="entry name" value="NAD(P)-bd_dom_sf"/>
</dbReference>
<dbReference type="NCBIfam" id="TIGR00036">
    <property type="entry name" value="dapB"/>
    <property type="match status" value="1"/>
</dbReference>
<dbReference type="PANTHER" id="PTHR20836:SF0">
    <property type="entry name" value="4-HYDROXY-TETRAHYDRODIPICOLINATE REDUCTASE 1, CHLOROPLASTIC-RELATED"/>
    <property type="match status" value="1"/>
</dbReference>
<dbReference type="PANTHER" id="PTHR20836">
    <property type="entry name" value="DIHYDRODIPICOLINATE REDUCTASE"/>
    <property type="match status" value="1"/>
</dbReference>
<dbReference type="Pfam" id="PF05173">
    <property type="entry name" value="DapB_C"/>
    <property type="match status" value="1"/>
</dbReference>
<dbReference type="Pfam" id="PF01113">
    <property type="entry name" value="DapB_N"/>
    <property type="match status" value="1"/>
</dbReference>
<dbReference type="PIRSF" id="PIRSF000161">
    <property type="entry name" value="DHPR"/>
    <property type="match status" value="1"/>
</dbReference>
<dbReference type="SUPFAM" id="SSF55347">
    <property type="entry name" value="Glyceraldehyde-3-phosphate dehydrogenase-like, C-terminal domain"/>
    <property type="match status" value="1"/>
</dbReference>
<dbReference type="SUPFAM" id="SSF51735">
    <property type="entry name" value="NAD(P)-binding Rossmann-fold domains"/>
    <property type="match status" value="1"/>
</dbReference>
<dbReference type="PROSITE" id="PS01298">
    <property type="entry name" value="DAPB"/>
    <property type="match status" value="1"/>
</dbReference>
<comment type="function">
    <text evidence="1">Catalyzes the conversion of 4-hydroxy-tetrahydrodipicolinate (HTPA) to tetrahydrodipicolinate.</text>
</comment>
<comment type="catalytic activity">
    <reaction evidence="1">
        <text>(S)-2,3,4,5-tetrahydrodipicolinate + NAD(+) + H2O = (2S,4S)-4-hydroxy-2,3,4,5-tetrahydrodipicolinate + NADH + H(+)</text>
        <dbReference type="Rhea" id="RHEA:35323"/>
        <dbReference type="ChEBI" id="CHEBI:15377"/>
        <dbReference type="ChEBI" id="CHEBI:15378"/>
        <dbReference type="ChEBI" id="CHEBI:16845"/>
        <dbReference type="ChEBI" id="CHEBI:57540"/>
        <dbReference type="ChEBI" id="CHEBI:57945"/>
        <dbReference type="ChEBI" id="CHEBI:67139"/>
        <dbReference type="EC" id="1.17.1.8"/>
    </reaction>
</comment>
<comment type="catalytic activity">
    <reaction evidence="1">
        <text>(S)-2,3,4,5-tetrahydrodipicolinate + NADP(+) + H2O = (2S,4S)-4-hydroxy-2,3,4,5-tetrahydrodipicolinate + NADPH + H(+)</text>
        <dbReference type="Rhea" id="RHEA:35331"/>
        <dbReference type="ChEBI" id="CHEBI:15377"/>
        <dbReference type="ChEBI" id="CHEBI:15378"/>
        <dbReference type="ChEBI" id="CHEBI:16845"/>
        <dbReference type="ChEBI" id="CHEBI:57783"/>
        <dbReference type="ChEBI" id="CHEBI:58349"/>
        <dbReference type="ChEBI" id="CHEBI:67139"/>
        <dbReference type="EC" id="1.17.1.8"/>
    </reaction>
</comment>
<comment type="pathway">
    <text evidence="1">Amino-acid biosynthesis; L-lysine biosynthesis via DAP pathway; (S)-tetrahydrodipicolinate from L-aspartate: step 4/4.</text>
</comment>
<comment type="subcellular location">
    <subcellularLocation>
        <location evidence="1">Cytoplasm</location>
    </subcellularLocation>
</comment>
<comment type="similarity">
    <text evidence="1">Belongs to the DapB family.</text>
</comment>
<comment type="caution">
    <text evidence="2">Was originally thought to be a dihydrodipicolinate reductase (DHDPR), catalyzing the conversion of dihydrodipicolinate to tetrahydrodipicolinate. However, it was shown in E.coli that the substrate of the enzymatic reaction is not dihydrodipicolinate (DHDP) but in fact (2S,4S)-4-hydroxy-2,3,4,5-tetrahydrodipicolinic acid (HTPA), the product released by the DapA-catalyzed reaction.</text>
</comment>
<reference key="1">
    <citation type="journal article" date="2001" name="Science">
        <title>Comparative genomics of Listeria species.</title>
        <authorList>
            <person name="Glaser P."/>
            <person name="Frangeul L."/>
            <person name="Buchrieser C."/>
            <person name="Rusniok C."/>
            <person name="Amend A."/>
            <person name="Baquero F."/>
            <person name="Berche P."/>
            <person name="Bloecker H."/>
            <person name="Brandt P."/>
            <person name="Chakraborty T."/>
            <person name="Charbit A."/>
            <person name="Chetouani F."/>
            <person name="Couve E."/>
            <person name="de Daruvar A."/>
            <person name="Dehoux P."/>
            <person name="Domann E."/>
            <person name="Dominguez-Bernal G."/>
            <person name="Duchaud E."/>
            <person name="Durant L."/>
            <person name="Dussurget O."/>
            <person name="Entian K.-D."/>
            <person name="Fsihi H."/>
            <person name="Garcia-del Portillo F."/>
            <person name="Garrido P."/>
            <person name="Gautier L."/>
            <person name="Goebel W."/>
            <person name="Gomez-Lopez N."/>
            <person name="Hain T."/>
            <person name="Hauf J."/>
            <person name="Jackson D."/>
            <person name="Jones L.-M."/>
            <person name="Kaerst U."/>
            <person name="Kreft J."/>
            <person name="Kuhn M."/>
            <person name="Kunst F."/>
            <person name="Kurapkat G."/>
            <person name="Madueno E."/>
            <person name="Maitournam A."/>
            <person name="Mata Vicente J."/>
            <person name="Ng E."/>
            <person name="Nedjari H."/>
            <person name="Nordsiek G."/>
            <person name="Novella S."/>
            <person name="de Pablos B."/>
            <person name="Perez-Diaz J.-C."/>
            <person name="Purcell R."/>
            <person name="Remmel B."/>
            <person name="Rose M."/>
            <person name="Schlueter T."/>
            <person name="Simoes N."/>
            <person name="Tierrez A."/>
            <person name="Vazquez-Boland J.-A."/>
            <person name="Voss H."/>
            <person name="Wehland J."/>
            <person name="Cossart P."/>
        </authorList>
    </citation>
    <scope>NUCLEOTIDE SEQUENCE [LARGE SCALE GENOMIC DNA]</scope>
    <source>
        <strain>ATCC BAA-680 / CLIP 11262</strain>
    </source>
</reference>
<sequence length="263" mass="28985">MKVAVSGFKGRMGHEVVKTILREEDLELVAVLDHEPKEKNIREIVEFSSLDVPVYGDLSEMLEEIKPDCVVDFTIPKVGYSNTKTILEHSVRAVVGTTGFTPEQISELKSIAESKKIGALIAPNFAVGAVLMMQFAQKAAKYFPNVEIIELHHDNKLDAPSGTAVKTAEMMAETREFVKQGAADEVELIEGARGGEYEGMRIHSVRLPGLVAHQEVIFGAEGQGLTIRHDSYDRISFMSGVALSVRKTKELETLIYGLENILD</sequence>
<feature type="chain" id="PRO_0000141452" description="4-hydroxy-tetrahydrodipicolinate reductase">
    <location>
        <begin position="1"/>
        <end position="263"/>
    </location>
</feature>
<feature type="active site" description="Proton donor/acceptor" evidence="1">
    <location>
        <position position="152"/>
    </location>
</feature>
<feature type="active site" description="Proton donor" evidence="1">
    <location>
        <position position="156"/>
    </location>
</feature>
<feature type="binding site" evidence="1">
    <location>
        <begin position="7"/>
        <end position="12"/>
    </location>
    <ligand>
        <name>NAD(+)</name>
        <dbReference type="ChEBI" id="CHEBI:57540"/>
    </ligand>
</feature>
<feature type="binding site" evidence="1">
    <location>
        <begin position="96"/>
        <end position="98"/>
    </location>
    <ligand>
        <name>NAD(+)</name>
        <dbReference type="ChEBI" id="CHEBI:57540"/>
    </ligand>
</feature>
<feature type="binding site" evidence="1">
    <location>
        <begin position="122"/>
        <end position="125"/>
    </location>
    <ligand>
        <name>NAD(+)</name>
        <dbReference type="ChEBI" id="CHEBI:57540"/>
    </ligand>
</feature>
<feature type="binding site" evidence="1">
    <location>
        <position position="153"/>
    </location>
    <ligand>
        <name>(S)-2,3,4,5-tetrahydrodipicolinate</name>
        <dbReference type="ChEBI" id="CHEBI:16845"/>
    </ligand>
</feature>
<feature type="binding site" evidence="1">
    <location>
        <begin position="162"/>
        <end position="163"/>
    </location>
    <ligand>
        <name>(S)-2,3,4,5-tetrahydrodipicolinate</name>
        <dbReference type="ChEBI" id="CHEBI:16845"/>
    </ligand>
</feature>
<name>DAPB_LISIN</name>
<protein>
    <recommendedName>
        <fullName evidence="1">4-hydroxy-tetrahydrodipicolinate reductase</fullName>
        <shortName evidence="1">HTPA reductase</shortName>
        <ecNumber evidence="1">1.17.1.8</ecNumber>
    </recommendedName>
</protein>